<dbReference type="EMBL" id="AJ006032">
    <property type="protein sequence ID" value="CAA06824.1"/>
    <property type="molecule type" value="mRNA"/>
</dbReference>
<dbReference type="EMBL" id="CU329671">
    <property type="protein sequence ID" value="CAA22676.1"/>
    <property type="molecule type" value="Genomic_DNA"/>
</dbReference>
<dbReference type="PIR" id="T39382">
    <property type="entry name" value="T39382"/>
</dbReference>
<dbReference type="RefSeq" id="NP_595948.1">
    <property type="nucleotide sequence ID" value="NM_001021857.2"/>
</dbReference>
<dbReference type="SMR" id="O59835"/>
<dbReference type="BioGRID" id="276552">
    <property type="interactions" value="28"/>
</dbReference>
<dbReference type="ComplexPortal" id="CPX-2100">
    <property type="entry name" value="DNA polymerase delta complex"/>
</dbReference>
<dbReference type="FunCoup" id="O59835">
    <property type="interactions" value="98"/>
</dbReference>
<dbReference type="STRING" id="284812.O59835"/>
<dbReference type="iPTMnet" id="O59835"/>
<dbReference type="PaxDb" id="4896-SPBC12D12.02c.1"/>
<dbReference type="EnsemblFungi" id="SPBC12D12.02c.1">
    <property type="protein sequence ID" value="SPBC12D12.02c.1:pep"/>
    <property type="gene ID" value="SPBC12D12.02c"/>
</dbReference>
<dbReference type="GeneID" id="2540008"/>
<dbReference type="KEGG" id="spo:2540008"/>
<dbReference type="PomBase" id="SPBC12D12.02c">
    <property type="gene designation" value="cdm1"/>
</dbReference>
<dbReference type="VEuPathDB" id="FungiDB:SPBC12D12.02c"/>
<dbReference type="eggNOG" id="ENOG502SC9I">
    <property type="taxonomic scope" value="Eukaryota"/>
</dbReference>
<dbReference type="HOGENOM" id="CLU_1628037_0_0_1"/>
<dbReference type="InParanoid" id="O59835"/>
<dbReference type="OMA" id="WRRAKRF"/>
<dbReference type="PhylomeDB" id="O59835"/>
<dbReference type="Reactome" id="R-SPO-110314">
    <property type="pathway name" value="Recognition of DNA damage by PCNA-containing replication complex"/>
</dbReference>
<dbReference type="Reactome" id="R-SPO-174437">
    <property type="pathway name" value="Removal of the Flap Intermediate from the C-strand"/>
</dbReference>
<dbReference type="Reactome" id="R-SPO-5358565">
    <property type="pathway name" value="Mismatch repair (MMR) directed by MSH2:MSH6 (MutSalpha)"/>
</dbReference>
<dbReference type="Reactome" id="R-SPO-5358606">
    <property type="pathway name" value="Mismatch repair (MMR) directed by MSH2:MSH3 (MutSbeta)"/>
</dbReference>
<dbReference type="Reactome" id="R-SPO-5651801">
    <property type="pathway name" value="PCNA-Dependent Long Patch Base Excision Repair"/>
</dbReference>
<dbReference type="Reactome" id="R-SPO-5656169">
    <property type="pathway name" value="Termination of translesion DNA synthesis"/>
</dbReference>
<dbReference type="Reactome" id="R-SPO-5696397">
    <property type="pathway name" value="Gap-filling DNA repair synthesis and ligation in GG-NER"/>
</dbReference>
<dbReference type="Reactome" id="R-SPO-5696400">
    <property type="pathway name" value="Dual Incision in GG-NER"/>
</dbReference>
<dbReference type="Reactome" id="R-SPO-6782135">
    <property type="pathway name" value="Dual incision in TC-NER"/>
</dbReference>
<dbReference type="Reactome" id="R-SPO-6782210">
    <property type="pathway name" value="Gap-filling DNA repair synthesis and ligation in TC-NER"/>
</dbReference>
<dbReference type="Reactome" id="R-SPO-69091">
    <property type="pathway name" value="Polymerase switching"/>
</dbReference>
<dbReference type="Reactome" id="R-SPO-69166">
    <property type="pathway name" value="Removal of the Flap Intermediate"/>
</dbReference>
<dbReference type="Reactome" id="R-SPO-69183">
    <property type="pathway name" value="Processive synthesis on the lagging strand"/>
</dbReference>
<dbReference type="PRO" id="PR:O59835"/>
<dbReference type="Proteomes" id="UP000002485">
    <property type="component" value="Chromosome II"/>
</dbReference>
<dbReference type="GO" id="GO:0005829">
    <property type="term" value="C:cytosol"/>
    <property type="evidence" value="ECO:0007005"/>
    <property type="project" value="PomBase"/>
</dbReference>
<dbReference type="GO" id="GO:0043625">
    <property type="term" value="C:delta DNA polymerase complex"/>
    <property type="evidence" value="ECO:0000314"/>
    <property type="project" value="PomBase"/>
</dbReference>
<dbReference type="GO" id="GO:0005634">
    <property type="term" value="C:nucleus"/>
    <property type="evidence" value="ECO:0007005"/>
    <property type="project" value="PomBase"/>
</dbReference>
<dbReference type="GO" id="GO:0003887">
    <property type="term" value="F:DNA-directed DNA polymerase activity"/>
    <property type="evidence" value="ECO:0007669"/>
    <property type="project" value="UniProtKB-KW"/>
</dbReference>
<dbReference type="GO" id="GO:0006271">
    <property type="term" value="P:DNA strand elongation involved in DNA replication"/>
    <property type="evidence" value="ECO:0000303"/>
    <property type="project" value="ComplexPortal"/>
</dbReference>
<dbReference type="GO" id="GO:1902983">
    <property type="term" value="P:DNA strand elongation involved in mitotic DNA replication"/>
    <property type="evidence" value="ECO:0000314"/>
    <property type="project" value="PomBase"/>
</dbReference>
<dbReference type="GO" id="GO:0000731">
    <property type="term" value="P:DNA synthesis involved in DNA repair"/>
    <property type="evidence" value="ECO:0000318"/>
    <property type="project" value="GO_Central"/>
</dbReference>
<dbReference type="GO" id="GO:1904161">
    <property type="term" value="P:DNA synthesis involved in UV-damage excision repair"/>
    <property type="evidence" value="ECO:0000314"/>
    <property type="project" value="PomBase"/>
</dbReference>
<dbReference type="GO" id="GO:0006261">
    <property type="term" value="P:DNA-templated DNA replication"/>
    <property type="evidence" value="ECO:0000318"/>
    <property type="project" value="GO_Central"/>
</dbReference>
<dbReference type="GO" id="GO:1903459">
    <property type="term" value="P:mitotic DNA replication lagging strand elongation"/>
    <property type="evidence" value="ECO:0000305"/>
    <property type="project" value="PomBase"/>
</dbReference>
<dbReference type="InterPro" id="IPR007218">
    <property type="entry name" value="DNA_pol_delta_4"/>
</dbReference>
<dbReference type="PANTHER" id="PTHR14303">
    <property type="entry name" value="DNA POLYMERASE DELTA SUBUNIT 4"/>
    <property type="match status" value="1"/>
</dbReference>
<dbReference type="PANTHER" id="PTHR14303:SF0">
    <property type="entry name" value="DNA POLYMERASE DELTA SUBUNIT 4"/>
    <property type="match status" value="1"/>
</dbReference>
<dbReference type="Pfam" id="PF04081">
    <property type="entry name" value="DNA_pol_delta_4"/>
    <property type="match status" value="1"/>
</dbReference>
<gene>
    <name type="primary">cdm1</name>
    <name type="ORF">SPBC12D12.02c</name>
</gene>
<reference key="1">
    <citation type="journal article" date="1998" name="Curr. Genet.">
        <title>Cdm1, the smallest subunit of DNA polymerase d in the fission yeast Schizosaccharomyces pombe, is non-essential for growth and division.</title>
        <authorList>
            <person name="Reynolds N."/>
            <person name="Watt A."/>
            <person name="Fantes P.A."/>
            <person name="MacNeill S.A."/>
        </authorList>
    </citation>
    <scope>NUCLEOTIDE SEQUENCE [MRNA]</scope>
</reference>
<reference key="2">
    <citation type="journal article" date="2002" name="Nature">
        <title>The genome sequence of Schizosaccharomyces pombe.</title>
        <authorList>
            <person name="Wood V."/>
            <person name="Gwilliam R."/>
            <person name="Rajandream M.A."/>
            <person name="Lyne M.H."/>
            <person name="Lyne R."/>
            <person name="Stewart A."/>
            <person name="Sgouros J.G."/>
            <person name="Peat N."/>
            <person name="Hayles J."/>
            <person name="Baker S.G."/>
            <person name="Basham D."/>
            <person name="Bowman S."/>
            <person name="Brooks K."/>
            <person name="Brown D."/>
            <person name="Brown S."/>
            <person name="Chillingworth T."/>
            <person name="Churcher C.M."/>
            <person name="Collins M."/>
            <person name="Connor R."/>
            <person name="Cronin A."/>
            <person name="Davis P."/>
            <person name="Feltwell T."/>
            <person name="Fraser A."/>
            <person name="Gentles S."/>
            <person name="Goble A."/>
            <person name="Hamlin N."/>
            <person name="Harris D.E."/>
            <person name="Hidalgo J."/>
            <person name="Hodgson G."/>
            <person name="Holroyd S."/>
            <person name="Hornsby T."/>
            <person name="Howarth S."/>
            <person name="Huckle E.J."/>
            <person name="Hunt S."/>
            <person name="Jagels K."/>
            <person name="James K.D."/>
            <person name="Jones L."/>
            <person name="Jones M."/>
            <person name="Leather S."/>
            <person name="McDonald S."/>
            <person name="McLean J."/>
            <person name="Mooney P."/>
            <person name="Moule S."/>
            <person name="Mungall K.L."/>
            <person name="Murphy L.D."/>
            <person name="Niblett D."/>
            <person name="Odell C."/>
            <person name="Oliver K."/>
            <person name="O'Neil S."/>
            <person name="Pearson D."/>
            <person name="Quail M.A."/>
            <person name="Rabbinowitsch E."/>
            <person name="Rutherford K.M."/>
            <person name="Rutter S."/>
            <person name="Saunders D."/>
            <person name="Seeger K."/>
            <person name="Sharp S."/>
            <person name="Skelton J."/>
            <person name="Simmonds M.N."/>
            <person name="Squares R."/>
            <person name="Squares S."/>
            <person name="Stevens K."/>
            <person name="Taylor K."/>
            <person name="Taylor R.G."/>
            <person name="Tivey A."/>
            <person name="Walsh S.V."/>
            <person name="Warren T."/>
            <person name="Whitehead S."/>
            <person name="Woodward J.R."/>
            <person name="Volckaert G."/>
            <person name="Aert R."/>
            <person name="Robben J."/>
            <person name="Grymonprez B."/>
            <person name="Weltjens I."/>
            <person name="Vanstreels E."/>
            <person name="Rieger M."/>
            <person name="Schaefer M."/>
            <person name="Mueller-Auer S."/>
            <person name="Gabel C."/>
            <person name="Fuchs M."/>
            <person name="Duesterhoeft A."/>
            <person name="Fritzc C."/>
            <person name="Holzer E."/>
            <person name="Moestl D."/>
            <person name="Hilbert H."/>
            <person name="Borzym K."/>
            <person name="Langer I."/>
            <person name="Beck A."/>
            <person name="Lehrach H."/>
            <person name="Reinhardt R."/>
            <person name="Pohl T.M."/>
            <person name="Eger P."/>
            <person name="Zimmermann W."/>
            <person name="Wedler H."/>
            <person name="Wambutt R."/>
            <person name="Purnelle B."/>
            <person name="Goffeau A."/>
            <person name="Cadieu E."/>
            <person name="Dreano S."/>
            <person name="Gloux S."/>
            <person name="Lelaure V."/>
            <person name="Mottier S."/>
            <person name="Galibert F."/>
            <person name="Aves S.J."/>
            <person name="Xiang Z."/>
            <person name="Hunt C."/>
            <person name="Moore K."/>
            <person name="Hurst S.M."/>
            <person name="Lucas M."/>
            <person name="Rochet M."/>
            <person name="Gaillardin C."/>
            <person name="Tallada V.A."/>
            <person name="Garzon A."/>
            <person name="Thode G."/>
            <person name="Daga R.R."/>
            <person name="Cruzado L."/>
            <person name="Jimenez J."/>
            <person name="Sanchez M."/>
            <person name="del Rey F."/>
            <person name="Benito J."/>
            <person name="Dominguez A."/>
            <person name="Revuelta J.L."/>
            <person name="Moreno S."/>
            <person name="Armstrong J."/>
            <person name="Forsburg S.L."/>
            <person name="Cerutti L."/>
            <person name="Lowe T."/>
            <person name="McCombie W.R."/>
            <person name="Paulsen I."/>
            <person name="Potashkin J."/>
            <person name="Shpakovski G.V."/>
            <person name="Ussery D."/>
            <person name="Barrell B.G."/>
            <person name="Nurse P."/>
        </authorList>
    </citation>
    <scope>NUCLEOTIDE SEQUENCE [LARGE SCALE GENOMIC DNA]</scope>
    <source>
        <strain>972 / ATCC 24843</strain>
    </source>
</reference>
<evidence type="ECO:0000250" key="1"/>
<evidence type="ECO:0000256" key="2">
    <source>
        <dbReference type="SAM" id="MobiDB-lite"/>
    </source>
</evidence>
<evidence type="ECO:0000305" key="3"/>
<name>DPOD4_SCHPO</name>
<keyword id="KW-0235">DNA replication</keyword>
<keyword id="KW-0239">DNA-directed DNA polymerase</keyword>
<keyword id="KW-0548">Nucleotidyltransferase</keyword>
<keyword id="KW-0539">Nucleus</keyword>
<keyword id="KW-1185">Reference proteome</keyword>
<keyword id="KW-0808">Transferase</keyword>
<sequence length="160" mass="18588">MKKRTTQAKKSGQNTNIRDVFPHVVRSNSSQSHIGKKVSSEQSPTPDVTITTKTLDERIKEDDELSKEVEEAWNQIMAERISEPIHCENITKVEFILHHFDTTARYGPYLGMTRMQRWKRAKNFNLNPPETVGKILMLEEADEENRKRESLFYDLQTIPG</sequence>
<proteinExistence type="evidence at transcript level"/>
<organism>
    <name type="scientific">Schizosaccharomyces pombe (strain 972 / ATCC 24843)</name>
    <name type="common">Fission yeast</name>
    <dbReference type="NCBI Taxonomy" id="284812"/>
    <lineage>
        <taxon>Eukaryota</taxon>
        <taxon>Fungi</taxon>
        <taxon>Dikarya</taxon>
        <taxon>Ascomycota</taxon>
        <taxon>Taphrinomycotina</taxon>
        <taxon>Schizosaccharomycetes</taxon>
        <taxon>Schizosaccharomycetales</taxon>
        <taxon>Schizosaccharomycetaceae</taxon>
        <taxon>Schizosaccharomyces</taxon>
    </lineage>
</organism>
<comment type="function">
    <text>Appears to have a role in the stabilization of the DNA polymerase delta complex.</text>
</comment>
<comment type="subunit">
    <text>Heterotetramer that consist of the pol3, cdc1, cdc27 and cdm1 subunits. Interacts with cdc1 and pol3.</text>
</comment>
<comment type="subcellular location">
    <subcellularLocation>
        <location evidence="1">Nucleus</location>
    </subcellularLocation>
</comment>
<comment type="similarity">
    <text evidence="3">Belongs to the DNA polymerase delta subunit 4 family.</text>
</comment>
<accession>O59835</accession>
<protein>
    <recommendedName>
        <fullName>DNA polymerase delta subunit 4</fullName>
    </recommendedName>
</protein>
<feature type="chain" id="PRO_0000186053" description="DNA polymerase delta subunit 4">
    <location>
        <begin position="1"/>
        <end position="160"/>
    </location>
</feature>
<feature type="region of interest" description="Disordered" evidence="2">
    <location>
        <begin position="1"/>
        <end position="48"/>
    </location>
</feature>
<feature type="compositionally biased region" description="Polar residues" evidence="2">
    <location>
        <begin position="8"/>
        <end position="17"/>
    </location>
</feature>